<gene>
    <name evidence="6" type="primary">far-1</name>
</gene>
<evidence type="ECO:0000250" key="1"/>
<evidence type="ECO:0000250" key="2">
    <source>
        <dbReference type="UniProtKB" id="Q25619"/>
    </source>
</evidence>
<evidence type="ECO:0000255" key="3"/>
<evidence type="ECO:0000269" key="4">
    <source>
    </source>
</evidence>
<evidence type="ECO:0000305" key="5"/>
<evidence type="ECO:0000312" key="6">
    <source>
        <dbReference type="EMBL" id="AAL33790.1"/>
    </source>
</evidence>
<name>FAR1_ONCDU</name>
<reference evidence="5 6" key="1">
    <citation type="journal article" date="2002" name="Mol. Biochem. Parasitol.">
        <title>The FAR proteins of filarial nematodes: secretion, glycosylation and lipid binding characteristics.</title>
        <authorList>
            <person name="Garofalo A."/>
            <person name="Klager S.L."/>
            <person name="Rowlinson M.C."/>
            <person name="Nirmalan N."/>
            <person name="Klion A.D."/>
            <person name="Allen J.E."/>
            <person name="Kennedy M.W."/>
            <person name="Bradley J.E."/>
        </authorList>
    </citation>
    <scope>NUCLEOTIDE SEQUENCE [MRNA]</scope>
    <scope>GLYCOSYLATION</scope>
</reference>
<keyword id="KW-0175">Coiled coil</keyword>
<keyword id="KW-0325">Glycoprotein</keyword>
<keyword id="KW-0446">Lipid-binding</keyword>
<keyword id="KW-0683">Retinol-binding</keyword>
<keyword id="KW-0964">Secreted</keyword>
<keyword id="KW-0732">Signal</keyword>
<keyword id="KW-0845">Vitamin A</keyword>
<protein>
    <recommendedName>
        <fullName>Fatty-acid and retinol-binding protein 1</fullName>
    </recommendedName>
    <alternativeName>
        <fullName>Od-FAR-1</fullName>
    </alternativeName>
</protein>
<dbReference type="EMBL" id="AY050254">
    <property type="protein sequence ID" value="AAL33790.1"/>
    <property type="molecule type" value="mRNA"/>
</dbReference>
<dbReference type="SMR" id="Q8WT58"/>
<dbReference type="GlyCosmos" id="Q8WT58">
    <property type="glycosylation" value="3 sites, No reported glycans"/>
</dbReference>
<dbReference type="GO" id="GO:0005576">
    <property type="term" value="C:extracellular region"/>
    <property type="evidence" value="ECO:0000250"/>
    <property type="project" value="UniProtKB"/>
</dbReference>
<dbReference type="GO" id="GO:0005504">
    <property type="term" value="F:fatty acid binding"/>
    <property type="evidence" value="ECO:0000250"/>
    <property type="project" value="UniProtKB"/>
</dbReference>
<dbReference type="GO" id="GO:0016918">
    <property type="term" value="F:retinal binding"/>
    <property type="evidence" value="ECO:0007669"/>
    <property type="project" value="UniProtKB-KW"/>
</dbReference>
<dbReference type="GO" id="GO:0019841">
    <property type="term" value="F:retinol binding"/>
    <property type="evidence" value="ECO:0000250"/>
    <property type="project" value="UniProtKB"/>
</dbReference>
<dbReference type="FunFam" id="1.20.120.1100:FF:000001">
    <property type="entry name" value="Fatty-acid and retinol-binding protein 1"/>
    <property type="match status" value="1"/>
</dbReference>
<dbReference type="Gene3D" id="1.20.120.1100">
    <property type="match status" value="1"/>
</dbReference>
<dbReference type="InterPro" id="IPR008632">
    <property type="entry name" value="Gp-FAR-1"/>
</dbReference>
<dbReference type="PANTHER" id="PTHR31418">
    <property type="entry name" value="FATTY-ACID AND RETINOL-BINDING PROTEIN 1"/>
    <property type="match status" value="1"/>
</dbReference>
<dbReference type="PANTHER" id="PTHR31418:SF7">
    <property type="entry name" value="FATTY-ACID AND RETINOL-BINDING PROTEIN 1"/>
    <property type="match status" value="1"/>
</dbReference>
<dbReference type="Pfam" id="PF05823">
    <property type="entry name" value="Gp-FAR-1"/>
    <property type="match status" value="1"/>
</dbReference>
<comment type="function">
    <text evidence="1">Binds retinol and different fatty acids.</text>
</comment>
<comment type="subcellular location">
    <subcellularLocation>
        <location evidence="2">Secreted</location>
    </subcellularLocation>
</comment>
<comment type="PTM">
    <text evidence="4">N-glycosylated.</text>
</comment>
<comment type="similarity">
    <text evidence="2 5">Belongs to the fatty-acid and retinol-binding protein (FARBP) family.</text>
</comment>
<organism>
    <name type="scientific">Onchocerca dukei</name>
    <name type="common">Filarial nematode worm</name>
    <dbReference type="NCBI Taxonomy" id="173668"/>
    <lineage>
        <taxon>Eukaryota</taxon>
        <taxon>Metazoa</taxon>
        <taxon>Ecdysozoa</taxon>
        <taxon>Nematoda</taxon>
        <taxon>Chromadorea</taxon>
        <taxon>Rhabditida</taxon>
        <taxon>Spirurina</taxon>
        <taxon>Spiruromorpha</taxon>
        <taxon>Filarioidea</taxon>
        <taxon>Onchocercidae</taxon>
        <taxon>Onchocerca</taxon>
    </lineage>
</organism>
<proteinExistence type="evidence at protein level"/>
<accession>Q8WT58</accession>
<feature type="signal peptide" evidence="3">
    <location>
        <begin position="1"/>
        <end position="16"/>
    </location>
</feature>
<feature type="chain" id="PRO_0000008762" description="Fatty-acid and retinol-binding protein 1" evidence="3">
    <location>
        <begin position="17"/>
        <end position="178"/>
    </location>
</feature>
<feature type="coiled-coil region" evidence="3">
    <location>
        <begin position="67"/>
        <end position="89"/>
    </location>
</feature>
<feature type="coiled-coil region" evidence="3">
    <location>
        <begin position="122"/>
        <end position="154"/>
    </location>
</feature>
<feature type="glycosylation site" description="N-linked (GlcNAc...) asparagine" evidence="3">
    <location>
        <position position="44"/>
    </location>
</feature>
<feature type="glycosylation site" description="N-linked (GlcNAc...) asparagine" evidence="3">
    <location>
        <position position="75"/>
    </location>
</feature>
<feature type="glycosylation site" description="N-linked (GlcNAc...) asparagine" evidence="3">
    <location>
        <position position="157"/>
    </location>
</feature>
<sequence length="178" mass="20552">MYHQLILMALIGVIMANVVPFSMSNIPEEYKEFIPEEVKNFYKNLTQEDRQILRELASKHATFANEDAALEALKNTSDKLYQKAVELRNFVKAKIDSLKPDAKAFVDEIIAKVRSLRPEDGQKLDMEKLKQAARDIIAKYEALNEETREELKATFPNTTKIITNEKFKRIANSFLQKN</sequence>